<dbReference type="EMBL" id="AB077075">
    <property type="protein sequence ID" value="BAB88575.1"/>
    <property type="molecule type" value="Genomic_DNA"/>
</dbReference>
<dbReference type="EMBL" id="AB077076">
    <property type="protein sequence ID" value="BAB88576.1"/>
    <property type="molecule type" value="Genomic_DNA"/>
</dbReference>
<dbReference type="EMBL" id="AB077079">
    <property type="protein sequence ID" value="BAB88579.1"/>
    <property type="molecule type" value="Genomic_DNA"/>
</dbReference>
<dbReference type="EMBL" id="AB077080">
    <property type="protein sequence ID" value="BAB88580.1"/>
    <property type="molecule type" value="Genomic_DNA"/>
</dbReference>
<dbReference type="EMBL" id="AB077082">
    <property type="protein sequence ID" value="BAB88582.1"/>
    <property type="molecule type" value="Genomic_DNA"/>
</dbReference>
<dbReference type="EMBL" id="AB077278">
    <property type="protein sequence ID" value="BAB88606.1"/>
    <property type="molecule type" value="Genomic_DNA"/>
</dbReference>
<dbReference type="EMBL" id="AB077081">
    <property type="protein sequence ID" value="BAB88581.1"/>
    <property type="molecule type" value="Genomic_DNA"/>
</dbReference>
<dbReference type="RefSeq" id="YP_008080913.1">
    <property type="nucleotide sequence ID" value="NC_021398.1"/>
</dbReference>
<dbReference type="SMR" id="Q8SEP4"/>
<dbReference type="GeneID" id="15822413"/>
<dbReference type="CTD" id="4519"/>
<dbReference type="GO" id="GO:0005743">
    <property type="term" value="C:mitochondrial inner membrane"/>
    <property type="evidence" value="ECO:0007669"/>
    <property type="project" value="UniProtKB-SubCell"/>
</dbReference>
<dbReference type="GO" id="GO:0045275">
    <property type="term" value="C:respiratory chain complex III"/>
    <property type="evidence" value="ECO:0007669"/>
    <property type="project" value="InterPro"/>
</dbReference>
<dbReference type="GO" id="GO:0046872">
    <property type="term" value="F:metal ion binding"/>
    <property type="evidence" value="ECO:0007669"/>
    <property type="project" value="UniProtKB-KW"/>
</dbReference>
<dbReference type="GO" id="GO:0008121">
    <property type="term" value="F:ubiquinol-cytochrome-c reductase activity"/>
    <property type="evidence" value="ECO:0007669"/>
    <property type="project" value="InterPro"/>
</dbReference>
<dbReference type="GO" id="GO:0006122">
    <property type="term" value="P:mitochondrial electron transport, ubiquinol to cytochrome c"/>
    <property type="evidence" value="ECO:0007669"/>
    <property type="project" value="TreeGrafter"/>
</dbReference>
<dbReference type="CDD" id="cd00290">
    <property type="entry name" value="cytochrome_b_C"/>
    <property type="match status" value="1"/>
</dbReference>
<dbReference type="CDD" id="cd00284">
    <property type="entry name" value="Cytochrome_b_N"/>
    <property type="match status" value="1"/>
</dbReference>
<dbReference type="FunFam" id="1.20.810.10:FF:000002">
    <property type="entry name" value="Cytochrome b"/>
    <property type="match status" value="1"/>
</dbReference>
<dbReference type="Gene3D" id="1.20.810.10">
    <property type="entry name" value="Cytochrome Bc1 Complex, Chain C"/>
    <property type="match status" value="1"/>
</dbReference>
<dbReference type="InterPro" id="IPR005798">
    <property type="entry name" value="Cyt_b/b6_C"/>
</dbReference>
<dbReference type="InterPro" id="IPR036150">
    <property type="entry name" value="Cyt_b/b6_C_sf"/>
</dbReference>
<dbReference type="InterPro" id="IPR005797">
    <property type="entry name" value="Cyt_b/b6_N"/>
</dbReference>
<dbReference type="InterPro" id="IPR027387">
    <property type="entry name" value="Cytb/b6-like_sf"/>
</dbReference>
<dbReference type="InterPro" id="IPR030689">
    <property type="entry name" value="Cytochrome_b"/>
</dbReference>
<dbReference type="InterPro" id="IPR048260">
    <property type="entry name" value="Cytochrome_b_C_euk/bac"/>
</dbReference>
<dbReference type="InterPro" id="IPR048259">
    <property type="entry name" value="Cytochrome_b_N_euk/bac"/>
</dbReference>
<dbReference type="InterPro" id="IPR016174">
    <property type="entry name" value="Di-haem_cyt_TM"/>
</dbReference>
<dbReference type="PANTHER" id="PTHR19271">
    <property type="entry name" value="CYTOCHROME B"/>
    <property type="match status" value="1"/>
</dbReference>
<dbReference type="PANTHER" id="PTHR19271:SF16">
    <property type="entry name" value="CYTOCHROME B"/>
    <property type="match status" value="1"/>
</dbReference>
<dbReference type="Pfam" id="PF00032">
    <property type="entry name" value="Cytochrom_B_C"/>
    <property type="match status" value="1"/>
</dbReference>
<dbReference type="Pfam" id="PF00033">
    <property type="entry name" value="Cytochrome_B"/>
    <property type="match status" value="1"/>
</dbReference>
<dbReference type="PIRSF" id="PIRSF038885">
    <property type="entry name" value="COB"/>
    <property type="match status" value="1"/>
</dbReference>
<dbReference type="SUPFAM" id="SSF81648">
    <property type="entry name" value="a domain/subunit of cytochrome bc1 complex (Ubiquinol-cytochrome c reductase)"/>
    <property type="match status" value="1"/>
</dbReference>
<dbReference type="SUPFAM" id="SSF81342">
    <property type="entry name" value="Transmembrane di-heme cytochromes"/>
    <property type="match status" value="1"/>
</dbReference>
<dbReference type="PROSITE" id="PS51003">
    <property type="entry name" value="CYTB_CTER"/>
    <property type="match status" value="1"/>
</dbReference>
<dbReference type="PROSITE" id="PS51002">
    <property type="entry name" value="CYTB_NTER"/>
    <property type="match status" value="1"/>
</dbReference>
<protein>
    <recommendedName>
        <fullName>Cytochrome b</fullName>
    </recommendedName>
    <alternativeName>
        <fullName>Complex III subunit 3</fullName>
    </alternativeName>
    <alternativeName>
        <fullName>Complex III subunit III</fullName>
    </alternativeName>
    <alternativeName>
        <fullName>Cytochrome b-c1 complex subunit 3</fullName>
    </alternativeName>
    <alternativeName>
        <fullName>Ubiquinol-cytochrome-c reductase complex cytochrome b subunit</fullName>
    </alternativeName>
</protein>
<feature type="chain" id="PRO_0000060832" description="Cytochrome b">
    <location>
        <begin position="1"/>
        <end position="379"/>
    </location>
</feature>
<feature type="transmembrane region" description="Helical" evidence="2">
    <location>
        <begin position="33"/>
        <end position="53"/>
    </location>
</feature>
<feature type="transmembrane region" description="Helical" evidence="2">
    <location>
        <begin position="77"/>
        <end position="98"/>
    </location>
</feature>
<feature type="transmembrane region" description="Helical" evidence="2">
    <location>
        <begin position="113"/>
        <end position="133"/>
    </location>
</feature>
<feature type="transmembrane region" description="Helical" evidence="2">
    <location>
        <begin position="178"/>
        <end position="198"/>
    </location>
</feature>
<feature type="transmembrane region" description="Helical" evidence="2">
    <location>
        <begin position="226"/>
        <end position="246"/>
    </location>
</feature>
<feature type="transmembrane region" description="Helical" evidence="2">
    <location>
        <begin position="288"/>
        <end position="308"/>
    </location>
</feature>
<feature type="transmembrane region" description="Helical" evidence="2">
    <location>
        <begin position="320"/>
        <end position="340"/>
    </location>
</feature>
<feature type="transmembrane region" description="Helical" evidence="2">
    <location>
        <begin position="347"/>
        <end position="367"/>
    </location>
</feature>
<feature type="binding site" description="axial binding residue" evidence="2">
    <location>
        <position position="83"/>
    </location>
    <ligand>
        <name>heme b</name>
        <dbReference type="ChEBI" id="CHEBI:60344"/>
        <label>b562</label>
    </ligand>
    <ligandPart>
        <name>Fe</name>
        <dbReference type="ChEBI" id="CHEBI:18248"/>
    </ligandPart>
</feature>
<feature type="binding site" description="axial binding residue" evidence="2">
    <location>
        <position position="97"/>
    </location>
    <ligand>
        <name>heme b</name>
        <dbReference type="ChEBI" id="CHEBI:60344"/>
        <label>b566</label>
    </ligand>
    <ligandPart>
        <name>Fe</name>
        <dbReference type="ChEBI" id="CHEBI:18248"/>
    </ligandPart>
</feature>
<feature type="binding site" description="axial binding residue" evidence="2">
    <location>
        <position position="182"/>
    </location>
    <ligand>
        <name>heme b</name>
        <dbReference type="ChEBI" id="CHEBI:60344"/>
        <label>b562</label>
    </ligand>
    <ligandPart>
        <name>Fe</name>
        <dbReference type="ChEBI" id="CHEBI:18248"/>
    </ligandPart>
</feature>
<feature type="binding site" description="axial binding residue" evidence="2">
    <location>
        <position position="196"/>
    </location>
    <ligand>
        <name>heme b</name>
        <dbReference type="ChEBI" id="CHEBI:60344"/>
        <label>b566</label>
    </ligand>
    <ligandPart>
        <name>Fe</name>
        <dbReference type="ChEBI" id="CHEBI:18248"/>
    </ligandPart>
</feature>
<feature type="binding site" evidence="2">
    <location>
        <position position="201"/>
    </location>
    <ligand>
        <name>a ubiquinone</name>
        <dbReference type="ChEBI" id="CHEBI:16389"/>
    </ligand>
</feature>
<organism>
    <name type="scientific">Crocidura shantungensis</name>
    <name type="common">Korean shrew</name>
    <name type="synonym">Crocidura suavolens shantungensis</name>
    <dbReference type="NCBI Taxonomy" id="183721"/>
    <lineage>
        <taxon>Eukaryota</taxon>
        <taxon>Metazoa</taxon>
        <taxon>Chordata</taxon>
        <taxon>Craniata</taxon>
        <taxon>Vertebrata</taxon>
        <taxon>Euteleostomi</taxon>
        <taxon>Mammalia</taxon>
        <taxon>Eutheria</taxon>
        <taxon>Laurasiatheria</taxon>
        <taxon>Eulipotyphla</taxon>
        <taxon>Soricidae</taxon>
        <taxon>Crocidurinae</taxon>
        <taxon>Crocidura</taxon>
    </lineage>
</organism>
<comment type="function">
    <text evidence="2">Component of the ubiquinol-cytochrome c reductase complex (complex III or cytochrome b-c1 complex) that is part of the mitochondrial respiratory chain. The b-c1 complex mediates electron transfer from ubiquinol to cytochrome c. Contributes to the generation of a proton gradient across the mitochondrial membrane that is then used for ATP synthesis.</text>
</comment>
<comment type="cofactor">
    <cofactor evidence="2">
        <name>heme b</name>
        <dbReference type="ChEBI" id="CHEBI:60344"/>
    </cofactor>
    <text evidence="2">Binds 2 heme b groups non-covalently.</text>
</comment>
<comment type="subunit">
    <text evidence="2">The cytochrome bc1 complex contains 11 subunits: 3 respiratory subunits (MT-CYB, CYC1 and UQCRFS1), 2 core proteins (UQCRC1 and UQCRC2) and 6 low-molecular weight proteins (UQCRH/QCR6, UQCRB/QCR7, UQCRQ/QCR8, UQCR10/QCR9, UQCR11/QCR10 and a cleavage product of UQCRFS1). This cytochrome bc1 complex then forms a dimer.</text>
</comment>
<comment type="subcellular location">
    <subcellularLocation>
        <location evidence="2">Mitochondrion inner membrane</location>
        <topology evidence="2">Multi-pass membrane protein</topology>
    </subcellularLocation>
</comment>
<comment type="miscellaneous">
    <text evidence="1">Heme 1 (or BL or b562) is low-potential and absorbs at about 562 nm, and heme 2 (or BH or b566) is high-potential and absorbs at about 566 nm.</text>
</comment>
<comment type="similarity">
    <text evidence="3 4">Belongs to the cytochrome b family.</text>
</comment>
<comment type="caution">
    <text evidence="2">The full-length protein contains only eight transmembrane helices, not nine as predicted by bioinformatics tools.</text>
</comment>
<gene>
    <name type="primary">MT-CYB</name>
    <name type="synonym">COB</name>
    <name type="synonym">CYTB</name>
    <name type="synonym">MTCYB</name>
</gene>
<name>CYB_CROSH</name>
<sequence>MTNIRKTHPLMKIVNSSFIDLPAPSNISSWWNFGSLLGICLIAQILTGLFLAMHYTSDTMTAFSSVTHICRDVNYGWLIRYLHANGASMFFICLFLHVGRGLYYGSYMYLETWNIGVLLLFAVMATAFMGYVLPWGQMSFWGATVITNLLSAIPYIGTNLVEWIWGGFSVDKATLTRFFAFHFILPFIVAALAGVHLLFLHETGSNNPSGLNSDTDKIPFHPYYTIKDILGALIMISTLSSLVLFSPDMLGDPDNYIPANPLNTPPHIKPEWYFLFAYAILRSIPNKLGGVLALVLSILILMIIPLLHTAKQRSMMFRPMSQCMFWILVADLFTLTWIGGQPVEYPFVVIGQLASVFYFLIILFIMPVTSMIENQLLKW</sequence>
<geneLocation type="mitochondrion"/>
<accession>Q8SEP4</accession>
<reference key="1">
    <citation type="journal article" date="2004" name="J. Mammal.">
        <title>Molecular phylogenetics of crocidura shrews (insectivora) in east and central Asia.</title>
        <authorList>
            <person name="Ohdachi S.D."/>
            <person name="Iwasa M.A."/>
            <person name="Nesterenko V.A."/>
            <person name="Abe H."/>
            <person name="Masuda R."/>
            <person name="Haberl W."/>
        </authorList>
    </citation>
    <scope>NUCLEOTIDE SEQUENCE [GENOMIC DNA]</scope>
</reference>
<proteinExistence type="inferred from homology"/>
<evidence type="ECO:0000250" key="1"/>
<evidence type="ECO:0000250" key="2">
    <source>
        <dbReference type="UniProtKB" id="P00157"/>
    </source>
</evidence>
<evidence type="ECO:0000255" key="3">
    <source>
        <dbReference type="PROSITE-ProRule" id="PRU00967"/>
    </source>
</evidence>
<evidence type="ECO:0000255" key="4">
    <source>
        <dbReference type="PROSITE-ProRule" id="PRU00968"/>
    </source>
</evidence>
<keyword id="KW-0249">Electron transport</keyword>
<keyword id="KW-0349">Heme</keyword>
<keyword id="KW-0408">Iron</keyword>
<keyword id="KW-0472">Membrane</keyword>
<keyword id="KW-0479">Metal-binding</keyword>
<keyword id="KW-0496">Mitochondrion</keyword>
<keyword id="KW-0999">Mitochondrion inner membrane</keyword>
<keyword id="KW-0679">Respiratory chain</keyword>
<keyword id="KW-0812">Transmembrane</keyword>
<keyword id="KW-1133">Transmembrane helix</keyword>
<keyword id="KW-0813">Transport</keyword>
<keyword id="KW-0830">Ubiquinone</keyword>